<accession>O81776</accession>
<accession>F4JSR5</accession>
<protein>
    <recommendedName>
        <fullName>Glutamate receptor 2.4</fullName>
    </recommendedName>
    <alternativeName>
        <fullName>Ligand-gated ion channel 2.4</fullName>
    </alternativeName>
</protein>
<keyword id="KW-0325">Glycoprotein</keyword>
<keyword id="KW-0407">Ion channel</keyword>
<keyword id="KW-0406">Ion transport</keyword>
<keyword id="KW-1071">Ligand-gated ion channel</keyword>
<keyword id="KW-0472">Membrane</keyword>
<keyword id="KW-0675">Receptor</keyword>
<keyword id="KW-1185">Reference proteome</keyword>
<keyword id="KW-0732">Signal</keyword>
<keyword id="KW-0812">Transmembrane</keyword>
<keyword id="KW-1133">Transmembrane helix</keyword>
<keyword id="KW-0813">Transport</keyword>
<gene>
    <name type="primary">GLR2.4</name>
    <name type="ordered locus">At4g31710</name>
    <name type="ORF">F28M20.100</name>
</gene>
<proteinExistence type="evidence at transcript level"/>
<evidence type="ECO:0000250" key="1"/>
<evidence type="ECO:0000255" key="2"/>
<evidence type="ECO:0000269" key="3">
    <source>
    </source>
</evidence>
<evidence type="ECO:0000305" key="4"/>
<organism>
    <name type="scientific">Arabidopsis thaliana</name>
    <name type="common">Mouse-ear cress</name>
    <dbReference type="NCBI Taxonomy" id="3702"/>
    <lineage>
        <taxon>Eukaryota</taxon>
        <taxon>Viridiplantae</taxon>
        <taxon>Streptophyta</taxon>
        <taxon>Embryophyta</taxon>
        <taxon>Tracheophyta</taxon>
        <taxon>Spermatophyta</taxon>
        <taxon>Magnoliopsida</taxon>
        <taxon>eudicotyledons</taxon>
        <taxon>Gunneridae</taxon>
        <taxon>Pentapetalae</taxon>
        <taxon>rosids</taxon>
        <taxon>malvids</taxon>
        <taxon>Brassicales</taxon>
        <taxon>Brassicaceae</taxon>
        <taxon>Camelineae</taxon>
        <taxon>Arabidopsis</taxon>
    </lineage>
</organism>
<sequence>MKRHLNDVVLVFLVFIFGVKLGKGQNTTIQVINVGVVTDVGTTASNLSLLAINMSLSDFYSSRPESRTRLLLNFADSRDDVVGAAAAALDLIKNKEVKAILGPRTTMQASFVIEVGQKSQVPIISFSATSPFLDSGRSPYFFRSTYDDSSQVQAISEIIKVFGWREVVPVYENNAFGEGIMPGLTDALQAINIRIPYRTVISPNATDDEISVDLLKLMTKPTRVFVVHMNRFLASRVFSKARETGLMKQGYAWILTNGVIDHLVLMNGTDIEAMQGVIGIRTHFPISEELQTFRSRLAKAFPVSELNIYGLRAYDATTALAMAVEEAGTTNLTFSKMDGRNISDLEALSVSEYGPKLIRSLSQIQFKGLSGDYHFVDGQLHASVFEIVNVIDGGGILVGFWTQDKGLVKDLSPSSGTTRTFSSWKNHLNPILWPGITLTVPKGWEIPTNGKELQIGVPVGTFPQFVKVTTDPLTHETIVTGFCIDFFEAVIQAMPYDVSHRFIPFGDDDGKTNVFDAVVGDTTILANRSSYVDFTLPYTTSGVGMVVPLKDNVARSSLIFFKPLTPGLWGMTLGSFFVVGFVVWILEHRVNSEFTGPPQYQISTMFWFAFSIMVFAPRERVMSFTARVVVITWYFIVLVLTQSYTASLSSLLTTQQLNPTETSIKNVLAKGGPVAYQRDSFVLGKLRESGFPESRLVPFTSPEKCEELLNKGPSKGGVSAAFMEVPYVRVFLGQYCKKYKMVEVPFDVDGFGFVFPIGSPLVADVSRAILKVAESNKATQLETAWFKNIDKTCPDPMNNPDPNPTVSFRKLSLDSFLLLFVAAATVCTLALLKFVICFLIQNRIILNDEFYRGKRMKEMWLKFMESDGESYISRVRSTCPQVLIQPREEDIDPING</sequence>
<feature type="signal peptide" evidence="2">
    <location>
        <begin position="1"/>
        <end position="24"/>
    </location>
</feature>
<feature type="chain" id="PRO_0000011599" description="Glutamate receptor 2.4">
    <location>
        <begin position="25"/>
        <end position="896"/>
    </location>
</feature>
<feature type="topological domain" description="Extracellular" evidence="2">
    <location>
        <begin position="25"/>
        <end position="565"/>
    </location>
</feature>
<feature type="transmembrane region" description="Helical" evidence="2">
    <location>
        <begin position="566"/>
        <end position="586"/>
    </location>
</feature>
<feature type="topological domain" description="Cytoplasmic" evidence="2">
    <location>
        <begin position="587"/>
        <end position="595"/>
    </location>
</feature>
<feature type="transmembrane region" description="Helical" evidence="2">
    <location>
        <begin position="596"/>
        <end position="616"/>
    </location>
</feature>
<feature type="topological domain" description="Cytoplasmic" evidence="2">
    <location>
        <begin position="617"/>
        <end position="620"/>
    </location>
</feature>
<feature type="transmembrane region" description="Helical" evidence="2">
    <location>
        <begin position="621"/>
        <end position="641"/>
    </location>
</feature>
<feature type="topological domain" description="Extracellular" evidence="2">
    <location>
        <begin position="642"/>
        <end position="815"/>
    </location>
</feature>
<feature type="transmembrane region" description="Helical" evidence="2">
    <location>
        <begin position="816"/>
        <end position="836"/>
    </location>
</feature>
<feature type="topological domain" description="Cytoplasmic" evidence="2">
    <location>
        <begin position="837"/>
        <end position="896"/>
    </location>
</feature>
<feature type="glycosylation site" description="N-linked (GlcNAc...) asparagine" evidence="2">
    <location>
        <position position="26"/>
    </location>
</feature>
<feature type="glycosylation site" description="N-linked (GlcNAc...) asparagine" evidence="2">
    <location>
        <position position="46"/>
    </location>
</feature>
<feature type="glycosylation site" description="N-linked (GlcNAc...) asparagine" evidence="2">
    <location>
        <position position="53"/>
    </location>
</feature>
<feature type="glycosylation site" description="N-linked (GlcNAc...) asparagine" evidence="2">
    <location>
        <position position="204"/>
    </location>
</feature>
<feature type="glycosylation site" description="N-linked (GlcNAc...) asparagine" evidence="2">
    <location>
        <position position="267"/>
    </location>
</feature>
<feature type="glycosylation site" description="N-linked (GlcNAc...) asparagine" evidence="2">
    <location>
        <position position="331"/>
    </location>
</feature>
<feature type="glycosylation site" description="N-linked (GlcNAc...) asparagine" evidence="2">
    <location>
        <position position="341"/>
    </location>
</feature>
<feature type="glycosylation site" description="N-linked (GlcNAc...) asparagine" evidence="2">
    <location>
        <position position="527"/>
    </location>
</feature>
<name>GLR24_ARATH</name>
<reference key="1">
    <citation type="journal article" date="1999" name="Nature">
        <title>Sequence and analysis of chromosome 4 of the plant Arabidopsis thaliana.</title>
        <authorList>
            <person name="Mayer K.F.X."/>
            <person name="Schueller C."/>
            <person name="Wambutt R."/>
            <person name="Murphy G."/>
            <person name="Volckaert G."/>
            <person name="Pohl T."/>
            <person name="Duesterhoeft A."/>
            <person name="Stiekema W."/>
            <person name="Entian K.-D."/>
            <person name="Terryn N."/>
            <person name="Harris B."/>
            <person name="Ansorge W."/>
            <person name="Brandt P."/>
            <person name="Grivell L.A."/>
            <person name="Rieger M."/>
            <person name="Weichselgartner M."/>
            <person name="de Simone V."/>
            <person name="Obermaier B."/>
            <person name="Mache R."/>
            <person name="Mueller M."/>
            <person name="Kreis M."/>
            <person name="Delseny M."/>
            <person name="Puigdomenech P."/>
            <person name="Watson M."/>
            <person name="Schmidtheini T."/>
            <person name="Reichert B."/>
            <person name="Portetelle D."/>
            <person name="Perez-Alonso M."/>
            <person name="Boutry M."/>
            <person name="Bancroft I."/>
            <person name="Vos P."/>
            <person name="Hoheisel J."/>
            <person name="Zimmermann W."/>
            <person name="Wedler H."/>
            <person name="Ridley P."/>
            <person name="Langham S.-A."/>
            <person name="McCullagh B."/>
            <person name="Bilham L."/>
            <person name="Robben J."/>
            <person name="van der Schueren J."/>
            <person name="Grymonprez B."/>
            <person name="Chuang Y.-J."/>
            <person name="Vandenbussche F."/>
            <person name="Braeken M."/>
            <person name="Weltjens I."/>
            <person name="Voet M."/>
            <person name="Bastiaens I."/>
            <person name="Aert R."/>
            <person name="Defoor E."/>
            <person name="Weitzenegger T."/>
            <person name="Bothe G."/>
            <person name="Ramsperger U."/>
            <person name="Hilbert H."/>
            <person name="Braun M."/>
            <person name="Holzer E."/>
            <person name="Brandt A."/>
            <person name="Peters S."/>
            <person name="van Staveren M."/>
            <person name="Dirkse W."/>
            <person name="Mooijman P."/>
            <person name="Klein Lankhorst R."/>
            <person name="Rose M."/>
            <person name="Hauf J."/>
            <person name="Koetter P."/>
            <person name="Berneiser S."/>
            <person name="Hempel S."/>
            <person name="Feldpausch M."/>
            <person name="Lamberth S."/>
            <person name="Van den Daele H."/>
            <person name="De Keyser A."/>
            <person name="Buysshaert C."/>
            <person name="Gielen J."/>
            <person name="Villarroel R."/>
            <person name="De Clercq R."/>
            <person name="van Montagu M."/>
            <person name="Rogers J."/>
            <person name="Cronin A."/>
            <person name="Quail M.A."/>
            <person name="Bray-Allen S."/>
            <person name="Clark L."/>
            <person name="Doggett J."/>
            <person name="Hall S."/>
            <person name="Kay M."/>
            <person name="Lennard N."/>
            <person name="McLay K."/>
            <person name="Mayes R."/>
            <person name="Pettett A."/>
            <person name="Rajandream M.A."/>
            <person name="Lyne M."/>
            <person name="Benes V."/>
            <person name="Rechmann S."/>
            <person name="Borkova D."/>
            <person name="Bloecker H."/>
            <person name="Scharfe M."/>
            <person name="Grimm M."/>
            <person name="Loehnert T.-H."/>
            <person name="Dose S."/>
            <person name="de Haan M."/>
            <person name="Maarse A.C."/>
            <person name="Schaefer M."/>
            <person name="Mueller-Auer S."/>
            <person name="Gabel C."/>
            <person name="Fuchs M."/>
            <person name="Fartmann B."/>
            <person name="Granderath K."/>
            <person name="Dauner D."/>
            <person name="Herzl A."/>
            <person name="Neumann S."/>
            <person name="Argiriou A."/>
            <person name="Vitale D."/>
            <person name="Liguori R."/>
            <person name="Piravandi E."/>
            <person name="Massenet O."/>
            <person name="Quigley F."/>
            <person name="Clabauld G."/>
            <person name="Muendlein A."/>
            <person name="Felber R."/>
            <person name="Schnabl S."/>
            <person name="Hiller R."/>
            <person name="Schmidt W."/>
            <person name="Lecharny A."/>
            <person name="Aubourg S."/>
            <person name="Chefdor F."/>
            <person name="Cooke R."/>
            <person name="Berger C."/>
            <person name="Monfort A."/>
            <person name="Casacuberta E."/>
            <person name="Gibbons T."/>
            <person name="Weber N."/>
            <person name="Vandenbol M."/>
            <person name="Bargues M."/>
            <person name="Terol J."/>
            <person name="Torres A."/>
            <person name="Perez-Perez A."/>
            <person name="Purnelle B."/>
            <person name="Bent E."/>
            <person name="Johnson S."/>
            <person name="Tacon D."/>
            <person name="Jesse T."/>
            <person name="Heijnen L."/>
            <person name="Schwarz S."/>
            <person name="Scholler P."/>
            <person name="Heber S."/>
            <person name="Francs P."/>
            <person name="Bielke C."/>
            <person name="Frishman D."/>
            <person name="Haase D."/>
            <person name="Lemcke K."/>
            <person name="Mewes H.-W."/>
            <person name="Stocker S."/>
            <person name="Zaccaria P."/>
            <person name="Bevan M."/>
            <person name="Wilson R.K."/>
            <person name="de la Bastide M."/>
            <person name="Habermann K."/>
            <person name="Parnell L."/>
            <person name="Dedhia N."/>
            <person name="Gnoj L."/>
            <person name="Schutz K."/>
            <person name="Huang E."/>
            <person name="Spiegel L."/>
            <person name="Sekhon M."/>
            <person name="Murray J."/>
            <person name="Sheet P."/>
            <person name="Cordes M."/>
            <person name="Abu-Threideh J."/>
            <person name="Stoneking T."/>
            <person name="Kalicki J."/>
            <person name="Graves T."/>
            <person name="Harmon G."/>
            <person name="Edwards J."/>
            <person name="Latreille P."/>
            <person name="Courtney L."/>
            <person name="Cloud J."/>
            <person name="Abbott A."/>
            <person name="Scott K."/>
            <person name="Johnson D."/>
            <person name="Minx P."/>
            <person name="Bentley D."/>
            <person name="Fulton B."/>
            <person name="Miller N."/>
            <person name="Greco T."/>
            <person name="Kemp K."/>
            <person name="Kramer J."/>
            <person name="Fulton L."/>
            <person name="Mardis E."/>
            <person name="Dante M."/>
            <person name="Pepin K."/>
            <person name="Hillier L.W."/>
            <person name="Nelson J."/>
            <person name="Spieth J."/>
            <person name="Ryan E."/>
            <person name="Andrews S."/>
            <person name="Geisel C."/>
            <person name="Layman D."/>
            <person name="Du H."/>
            <person name="Ali J."/>
            <person name="Berghoff A."/>
            <person name="Jones K."/>
            <person name="Drone K."/>
            <person name="Cotton M."/>
            <person name="Joshu C."/>
            <person name="Antonoiu B."/>
            <person name="Zidanic M."/>
            <person name="Strong C."/>
            <person name="Sun H."/>
            <person name="Lamar B."/>
            <person name="Yordan C."/>
            <person name="Ma P."/>
            <person name="Zhong J."/>
            <person name="Preston R."/>
            <person name="Vil D."/>
            <person name="Shekher M."/>
            <person name="Matero A."/>
            <person name="Shah R."/>
            <person name="Swaby I.K."/>
            <person name="O'Shaughnessy A."/>
            <person name="Rodriguez M."/>
            <person name="Hoffman J."/>
            <person name="Till S."/>
            <person name="Granat S."/>
            <person name="Shohdy N."/>
            <person name="Hasegawa A."/>
            <person name="Hameed A."/>
            <person name="Lodhi M."/>
            <person name="Johnson A."/>
            <person name="Chen E."/>
            <person name="Marra M.A."/>
            <person name="Martienssen R."/>
            <person name="McCombie W.R."/>
        </authorList>
    </citation>
    <scope>NUCLEOTIDE SEQUENCE [LARGE SCALE GENOMIC DNA]</scope>
    <source>
        <strain>cv. Columbia</strain>
    </source>
</reference>
<reference key="2">
    <citation type="journal article" date="2017" name="Plant J.">
        <title>Araport11: a complete reannotation of the Arabidopsis thaliana reference genome.</title>
        <authorList>
            <person name="Cheng C.Y."/>
            <person name="Krishnakumar V."/>
            <person name="Chan A.P."/>
            <person name="Thibaud-Nissen F."/>
            <person name="Schobel S."/>
            <person name="Town C.D."/>
        </authorList>
    </citation>
    <scope>GENOME REANNOTATION</scope>
    <source>
        <strain>cv. Columbia</strain>
    </source>
</reference>
<reference key="3">
    <citation type="journal article" date="2001" name="Science">
        <title>The identity of plant glutamate receptors.</title>
        <authorList>
            <person name="Lacombe B."/>
            <person name="Becker D."/>
            <person name="Hedrich R."/>
            <person name="DeSalle R."/>
            <person name="Hollmann M."/>
            <person name="Kwak J.M."/>
            <person name="Schroeder J.I."/>
            <person name="Le Novere N."/>
            <person name="Nam H.G."/>
            <person name="Spalding E.P."/>
            <person name="Tester M."/>
            <person name="Turano F.J."/>
            <person name="Chiu J."/>
            <person name="Coruzzi G."/>
        </authorList>
    </citation>
    <scope>GENE FAMILY</scope>
    <scope>NOMENCLATURE</scope>
</reference>
<reference key="4">
    <citation type="journal article" date="2002" name="Mol. Biol. Evol.">
        <title>Phylogenetic and expression analysis of the glutamate-receptor-like gene family in Arabidopsis thaliana.</title>
        <authorList>
            <person name="Chiu J.C."/>
            <person name="Brenner E.D."/>
            <person name="DeSalle R."/>
            <person name="Nitabach M.N."/>
            <person name="Holmes T.C."/>
            <person name="Coruzzi G.M."/>
        </authorList>
    </citation>
    <scope>TISSUE SPECIFICITY</scope>
</reference>
<comment type="function">
    <text>Glutamate-gated receptor that probably acts as a non-selective cation channel. May be involved in light-signal transduction and calcium homeostasis via the regulation of calcium influx into cells.</text>
</comment>
<comment type="subunit">
    <text evidence="1">May form heteromers.</text>
</comment>
<comment type="subcellular location">
    <subcellularLocation>
        <location>Membrane</location>
        <topology>Multi-pass membrane protein</topology>
    </subcellularLocation>
</comment>
<comment type="tissue specificity">
    <text evidence="3">Expressed predominantly in roots.</text>
</comment>
<comment type="similarity">
    <text evidence="4">Belongs to the glutamate-gated ion channel (TC 1.A.10.1) family.</text>
</comment>
<comment type="sequence caution" evidence="4">
    <conflict type="erroneous gene model prediction">
        <sequence resource="EMBL-CDS" id="CAA19752"/>
    </conflict>
</comment>
<comment type="sequence caution" evidence="4">
    <conflict type="erroneous gene model prediction">
        <sequence resource="EMBL-CDS" id="CAB79889"/>
    </conflict>
</comment>
<dbReference type="EMBL" id="AL031004">
    <property type="protein sequence ID" value="CAA19752.1"/>
    <property type="status" value="ALT_SEQ"/>
    <property type="molecule type" value="Genomic_DNA"/>
</dbReference>
<dbReference type="EMBL" id="AL161579">
    <property type="protein sequence ID" value="CAB79889.1"/>
    <property type="status" value="ALT_SEQ"/>
    <property type="molecule type" value="Genomic_DNA"/>
</dbReference>
<dbReference type="EMBL" id="CP002687">
    <property type="protein sequence ID" value="AEE85948.2"/>
    <property type="molecule type" value="Genomic_DNA"/>
</dbReference>
<dbReference type="PIR" id="T05099">
    <property type="entry name" value="T05099"/>
</dbReference>
<dbReference type="RefSeq" id="NP_001320108.1">
    <property type="nucleotide sequence ID" value="NM_001342106.1"/>
</dbReference>
<dbReference type="SMR" id="O81776"/>
<dbReference type="BioGRID" id="14585">
    <property type="interactions" value="1"/>
</dbReference>
<dbReference type="FunCoup" id="O81776">
    <property type="interactions" value="147"/>
</dbReference>
<dbReference type="STRING" id="3702.O81776"/>
<dbReference type="GlyCosmos" id="O81776">
    <property type="glycosylation" value="8 sites, No reported glycans"/>
</dbReference>
<dbReference type="GlyGen" id="O81776">
    <property type="glycosylation" value="8 sites"/>
</dbReference>
<dbReference type="PaxDb" id="3702-AT4G31710.1"/>
<dbReference type="EnsemblPlants" id="AT4G31710.1">
    <property type="protein sequence ID" value="AT4G31710.1"/>
    <property type="gene ID" value="AT4G31710"/>
</dbReference>
<dbReference type="GeneID" id="829299"/>
<dbReference type="Gramene" id="AT4G31710.1">
    <property type="protein sequence ID" value="AT4G31710.1"/>
    <property type="gene ID" value="AT4G31710"/>
</dbReference>
<dbReference type="KEGG" id="ath:AT4G31710"/>
<dbReference type="Araport" id="AT4G31710"/>
<dbReference type="TAIR" id="AT4G31710">
    <property type="gene designation" value="GLR2.4"/>
</dbReference>
<dbReference type="eggNOG" id="KOG1052">
    <property type="taxonomic scope" value="Eukaryota"/>
</dbReference>
<dbReference type="HOGENOM" id="CLU_007358_0_2_1"/>
<dbReference type="InParanoid" id="O81776"/>
<dbReference type="PhylomeDB" id="O81776"/>
<dbReference type="PRO" id="PR:O81776"/>
<dbReference type="Proteomes" id="UP000006548">
    <property type="component" value="Chromosome 4"/>
</dbReference>
<dbReference type="ExpressionAtlas" id="O81776">
    <property type="expression patterns" value="baseline and differential"/>
</dbReference>
<dbReference type="GO" id="GO:0005886">
    <property type="term" value="C:plasma membrane"/>
    <property type="evidence" value="ECO:0000250"/>
    <property type="project" value="UniProtKB"/>
</dbReference>
<dbReference type="GO" id="GO:0005262">
    <property type="term" value="F:calcium channel activity"/>
    <property type="evidence" value="ECO:0000250"/>
    <property type="project" value="UniProtKB"/>
</dbReference>
<dbReference type="GO" id="GO:0008066">
    <property type="term" value="F:glutamate receptor activity"/>
    <property type="evidence" value="ECO:0000250"/>
    <property type="project" value="UniProtKB"/>
</dbReference>
<dbReference type="GO" id="GO:0015276">
    <property type="term" value="F:ligand-gated monoatomic ion channel activity"/>
    <property type="evidence" value="ECO:0007669"/>
    <property type="project" value="InterPro"/>
</dbReference>
<dbReference type="GO" id="GO:0006816">
    <property type="term" value="P:calcium ion transport"/>
    <property type="evidence" value="ECO:0000250"/>
    <property type="project" value="UniProtKB"/>
</dbReference>
<dbReference type="GO" id="GO:0019722">
    <property type="term" value="P:calcium-mediated signaling"/>
    <property type="evidence" value="ECO:0000250"/>
    <property type="project" value="UniProtKB"/>
</dbReference>
<dbReference type="GO" id="GO:0071230">
    <property type="term" value="P:cellular response to amino acid stimulus"/>
    <property type="evidence" value="ECO:0000250"/>
    <property type="project" value="UniProtKB"/>
</dbReference>
<dbReference type="CDD" id="cd13686">
    <property type="entry name" value="GluR_Plant"/>
    <property type="match status" value="1"/>
</dbReference>
<dbReference type="CDD" id="cd19990">
    <property type="entry name" value="PBP1_GABAb_receptor_plant"/>
    <property type="match status" value="1"/>
</dbReference>
<dbReference type="FunFam" id="1.10.287.70:FF:000037">
    <property type="entry name" value="Glutamate receptor"/>
    <property type="match status" value="1"/>
</dbReference>
<dbReference type="FunFam" id="3.40.50.2300:FF:000081">
    <property type="entry name" value="Glutamate receptor"/>
    <property type="match status" value="1"/>
</dbReference>
<dbReference type="FunFam" id="3.40.50.2300:FF:000310">
    <property type="entry name" value="Glutamate receptor"/>
    <property type="match status" value="1"/>
</dbReference>
<dbReference type="Gene3D" id="1.10.287.70">
    <property type="match status" value="1"/>
</dbReference>
<dbReference type="Gene3D" id="3.40.50.2300">
    <property type="match status" value="2"/>
</dbReference>
<dbReference type="Gene3D" id="3.40.190.10">
    <property type="entry name" value="Periplasmic binding protein-like II"/>
    <property type="match status" value="2"/>
</dbReference>
<dbReference type="InterPro" id="IPR001828">
    <property type="entry name" value="ANF_lig-bd_rcpt"/>
</dbReference>
<dbReference type="InterPro" id="IPR044440">
    <property type="entry name" value="GABAb_receptor_plant_PBP1"/>
</dbReference>
<dbReference type="InterPro" id="IPR015683">
    <property type="entry name" value="Ionotropic_Glu_rcpt"/>
</dbReference>
<dbReference type="InterPro" id="IPR001320">
    <property type="entry name" value="Iontro_rcpt_C"/>
</dbReference>
<dbReference type="InterPro" id="IPR017103">
    <property type="entry name" value="Iontropic_Glu_rcpt_pln"/>
</dbReference>
<dbReference type="InterPro" id="IPR028082">
    <property type="entry name" value="Peripla_BP_I"/>
</dbReference>
<dbReference type="InterPro" id="IPR001638">
    <property type="entry name" value="Solute-binding_3/MltF_N"/>
</dbReference>
<dbReference type="PANTHER" id="PTHR34836">
    <property type="entry name" value="OS06G0188250 PROTEIN"/>
    <property type="match status" value="1"/>
</dbReference>
<dbReference type="PANTHER" id="PTHR34836:SF1">
    <property type="entry name" value="OS09G0428600 PROTEIN"/>
    <property type="match status" value="1"/>
</dbReference>
<dbReference type="Pfam" id="PF01094">
    <property type="entry name" value="ANF_receptor"/>
    <property type="match status" value="1"/>
</dbReference>
<dbReference type="Pfam" id="PF00060">
    <property type="entry name" value="Lig_chan"/>
    <property type="match status" value="1"/>
</dbReference>
<dbReference type="Pfam" id="PF00497">
    <property type="entry name" value="SBP_bac_3"/>
    <property type="match status" value="1"/>
</dbReference>
<dbReference type="PIRSF" id="PIRSF037090">
    <property type="entry name" value="Iontro_Glu-like_rcpt_pln"/>
    <property type="match status" value="1"/>
</dbReference>
<dbReference type="SMART" id="SM00079">
    <property type="entry name" value="PBPe"/>
    <property type="match status" value="1"/>
</dbReference>
<dbReference type="SUPFAM" id="SSF53822">
    <property type="entry name" value="Periplasmic binding protein-like I"/>
    <property type="match status" value="1"/>
</dbReference>
<dbReference type="SUPFAM" id="SSF53850">
    <property type="entry name" value="Periplasmic binding protein-like II"/>
    <property type="match status" value="1"/>
</dbReference>